<protein>
    <recommendedName>
        <fullName>Elongation factor Ts</fullName>
        <shortName>EF-Ts</shortName>
    </recommendedName>
</protein>
<gene>
    <name type="primary">tsf</name>
    <name type="ordered locus">sll1261</name>
</gene>
<keyword id="KW-0963">Cytoplasm</keyword>
<keyword id="KW-0903">Direct protein sequencing</keyword>
<keyword id="KW-0251">Elongation factor</keyword>
<keyword id="KW-0648">Protein biosynthesis</keyword>
<keyword id="KW-1185">Reference proteome</keyword>
<organism>
    <name type="scientific">Synechocystis sp. (strain ATCC 27184 / PCC 6803 / Kazusa)</name>
    <dbReference type="NCBI Taxonomy" id="1111708"/>
    <lineage>
        <taxon>Bacteria</taxon>
        <taxon>Bacillati</taxon>
        <taxon>Cyanobacteriota</taxon>
        <taxon>Cyanophyceae</taxon>
        <taxon>Synechococcales</taxon>
        <taxon>Merismopediaceae</taxon>
        <taxon>Synechocystis</taxon>
    </lineage>
</organism>
<name>EFTS_SYNY3</name>
<accession>P74070</accession>
<comment type="function">
    <text evidence="1">Associates with the EF-Tu.GDP complex and induces the exchange of GDP to GTP. It remains bound to the aminoacyl-tRNA.EF-Tu.GTP complex up to the GTP hydrolysis stage on the ribosome (By similarity).</text>
</comment>
<comment type="subcellular location">
    <subcellularLocation>
        <location evidence="1">Cytoplasm</location>
    </subcellularLocation>
</comment>
<comment type="similarity">
    <text evidence="3">Belongs to the EF-Ts family.</text>
</comment>
<reference key="1">
    <citation type="journal article" date="1996" name="DNA Res.">
        <title>Sequence analysis of the genome of the unicellular cyanobacterium Synechocystis sp. strain PCC6803. II. Sequence determination of the entire genome and assignment of potential protein-coding regions.</title>
        <authorList>
            <person name="Kaneko T."/>
            <person name="Sato S."/>
            <person name="Kotani H."/>
            <person name="Tanaka A."/>
            <person name="Asamizu E."/>
            <person name="Nakamura Y."/>
            <person name="Miyajima N."/>
            <person name="Hirosawa M."/>
            <person name="Sugiura M."/>
            <person name="Sasamoto S."/>
            <person name="Kimura T."/>
            <person name="Hosouchi T."/>
            <person name="Matsuno A."/>
            <person name="Muraki A."/>
            <person name="Nakazaki N."/>
            <person name="Naruo K."/>
            <person name="Okumura S."/>
            <person name="Shimpo S."/>
            <person name="Takeuchi C."/>
            <person name="Wada T."/>
            <person name="Watanabe A."/>
            <person name="Yamada M."/>
            <person name="Yasuda M."/>
            <person name="Tabata S."/>
        </authorList>
    </citation>
    <scope>NUCLEOTIDE SEQUENCE [LARGE SCALE GENOMIC DNA]</scope>
    <source>
        <strain>ATCC 27184 / PCC 6803 / Kazusa</strain>
    </source>
</reference>
<reference key="2">
    <citation type="journal article" date="1997" name="Electrophoresis">
        <title>Towards a proteome project of cyanobacterium Synechocystis sp. strain PCC6803: linking 130 protein spots with their respective genes.</title>
        <authorList>
            <person name="Sazuka T."/>
            <person name="Ohara O."/>
        </authorList>
    </citation>
    <scope>PROTEIN SEQUENCE OF 2-20</scope>
</reference>
<evidence type="ECO:0000250" key="1"/>
<evidence type="ECO:0000269" key="2">
    <source>
    </source>
</evidence>
<evidence type="ECO:0000305" key="3"/>
<sequence length="218" mass="24231">MAEITAQLVKELREKTGAGMMDCKKALKENEGDLEKSIEWLRQKGIASADKKSGRTAAEGLVHSYIHFGGRIGVLVEVNCETDFVARGDRFKDLVNDVAMQIAACPNVEYVSVADIPQEMVAKEKEIEMGRDDLGKKPANIKEKIVQGRIDKRLKELSLLDQPYIKDQNLTIEELVKQAIAELGENIQVRRFIRFNLGEGIEKAETNFAEEVAAAAKG</sequence>
<dbReference type="EMBL" id="BA000022">
    <property type="protein sequence ID" value="BAA18146.1"/>
    <property type="molecule type" value="Genomic_DNA"/>
</dbReference>
<dbReference type="PIR" id="S75585">
    <property type="entry name" value="S75585"/>
</dbReference>
<dbReference type="SMR" id="P74070"/>
<dbReference type="FunCoup" id="P74070">
    <property type="interactions" value="469"/>
</dbReference>
<dbReference type="STRING" id="1148.gene:10499018"/>
<dbReference type="PaxDb" id="1148-1653231"/>
<dbReference type="EnsemblBacteria" id="BAA18146">
    <property type="protein sequence ID" value="BAA18146"/>
    <property type="gene ID" value="BAA18146"/>
</dbReference>
<dbReference type="KEGG" id="syn:sll1261"/>
<dbReference type="eggNOG" id="COG0264">
    <property type="taxonomic scope" value="Bacteria"/>
</dbReference>
<dbReference type="InParanoid" id="P74070"/>
<dbReference type="PhylomeDB" id="P74070"/>
<dbReference type="Proteomes" id="UP000001425">
    <property type="component" value="Chromosome"/>
</dbReference>
<dbReference type="GO" id="GO:0005737">
    <property type="term" value="C:cytoplasm"/>
    <property type="evidence" value="ECO:0007669"/>
    <property type="project" value="UniProtKB-SubCell"/>
</dbReference>
<dbReference type="GO" id="GO:0003746">
    <property type="term" value="F:translation elongation factor activity"/>
    <property type="evidence" value="ECO:0007669"/>
    <property type="project" value="UniProtKB-UniRule"/>
</dbReference>
<dbReference type="CDD" id="cd14275">
    <property type="entry name" value="UBA_EF-Ts"/>
    <property type="match status" value="1"/>
</dbReference>
<dbReference type="FunFam" id="1.10.286.20:FF:000001">
    <property type="entry name" value="Elongation factor Ts"/>
    <property type="match status" value="1"/>
</dbReference>
<dbReference type="FunFam" id="1.10.8.10:FF:000001">
    <property type="entry name" value="Elongation factor Ts"/>
    <property type="match status" value="1"/>
</dbReference>
<dbReference type="Gene3D" id="1.10.286.20">
    <property type="match status" value="1"/>
</dbReference>
<dbReference type="Gene3D" id="1.10.8.10">
    <property type="entry name" value="DNA helicase RuvA subunit, C-terminal domain"/>
    <property type="match status" value="1"/>
</dbReference>
<dbReference type="Gene3D" id="3.30.479.20">
    <property type="entry name" value="Elongation factor Ts, dimerisation domain"/>
    <property type="match status" value="1"/>
</dbReference>
<dbReference type="HAMAP" id="MF_00050">
    <property type="entry name" value="EF_Ts"/>
    <property type="match status" value="1"/>
</dbReference>
<dbReference type="InterPro" id="IPR036402">
    <property type="entry name" value="EF-Ts_dimer_sf"/>
</dbReference>
<dbReference type="InterPro" id="IPR001816">
    <property type="entry name" value="Transl_elong_EFTs/EF1B"/>
</dbReference>
<dbReference type="InterPro" id="IPR014039">
    <property type="entry name" value="Transl_elong_EFTs/EF1B_dimer"/>
</dbReference>
<dbReference type="InterPro" id="IPR018101">
    <property type="entry name" value="Transl_elong_Ts_CS"/>
</dbReference>
<dbReference type="InterPro" id="IPR009060">
    <property type="entry name" value="UBA-like_sf"/>
</dbReference>
<dbReference type="NCBIfam" id="TIGR00116">
    <property type="entry name" value="tsf"/>
    <property type="match status" value="2"/>
</dbReference>
<dbReference type="PANTHER" id="PTHR11741">
    <property type="entry name" value="ELONGATION FACTOR TS"/>
    <property type="match status" value="1"/>
</dbReference>
<dbReference type="PANTHER" id="PTHR11741:SF10">
    <property type="entry name" value="POLYPROTEIN OF EF-TS, CHLOROPLASTIC"/>
    <property type="match status" value="1"/>
</dbReference>
<dbReference type="Pfam" id="PF00889">
    <property type="entry name" value="EF_TS"/>
    <property type="match status" value="2"/>
</dbReference>
<dbReference type="SUPFAM" id="SSF54713">
    <property type="entry name" value="Elongation factor Ts (EF-Ts), dimerisation domain"/>
    <property type="match status" value="1"/>
</dbReference>
<dbReference type="SUPFAM" id="SSF46934">
    <property type="entry name" value="UBA-like"/>
    <property type="match status" value="1"/>
</dbReference>
<dbReference type="PROSITE" id="PS01126">
    <property type="entry name" value="EF_TS_1"/>
    <property type="match status" value="1"/>
</dbReference>
<dbReference type="PROSITE" id="PS01127">
    <property type="entry name" value="EF_TS_2"/>
    <property type="match status" value="1"/>
</dbReference>
<feature type="initiator methionine" description="Removed" evidence="2">
    <location>
        <position position="1"/>
    </location>
</feature>
<feature type="chain" id="PRO_0000161219" description="Elongation factor Ts">
    <location>
        <begin position="2"/>
        <end position="218"/>
    </location>
</feature>
<feature type="region of interest" description="Involved in Mg(2+) ion dislocation from EF-Tu" evidence="1">
    <location>
        <begin position="82"/>
        <end position="85"/>
    </location>
</feature>
<proteinExistence type="evidence at protein level"/>